<gene>
    <name evidence="1" type="primary">actP</name>
    <name type="ordered locus">ECSE_4362</name>
</gene>
<accession>B6I5T5</accession>
<feature type="chain" id="PRO_1000145717" description="Cation/acetate symporter ActP">
    <location>
        <begin position="1"/>
        <end position="549"/>
    </location>
</feature>
<feature type="transmembrane region" description="Helical" evidence="1">
    <location>
        <begin position="33"/>
        <end position="53"/>
    </location>
</feature>
<feature type="transmembrane region" description="Helical" evidence="1">
    <location>
        <begin position="77"/>
        <end position="97"/>
    </location>
</feature>
<feature type="transmembrane region" description="Helical" evidence="1">
    <location>
        <begin position="103"/>
        <end position="123"/>
    </location>
</feature>
<feature type="transmembrane region" description="Helical" evidence="1">
    <location>
        <begin position="148"/>
        <end position="168"/>
    </location>
</feature>
<feature type="transmembrane region" description="Helical" evidence="1">
    <location>
        <begin position="183"/>
        <end position="203"/>
    </location>
</feature>
<feature type="transmembrane region" description="Helical" evidence="1">
    <location>
        <begin position="206"/>
        <end position="226"/>
    </location>
</feature>
<feature type="transmembrane region" description="Helical" evidence="1">
    <location>
        <begin position="262"/>
        <end position="282"/>
    </location>
</feature>
<feature type="transmembrane region" description="Helical" evidence="1">
    <location>
        <begin position="303"/>
        <end position="323"/>
    </location>
</feature>
<feature type="transmembrane region" description="Helical" evidence="1">
    <location>
        <begin position="355"/>
        <end position="375"/>
    </location>
</feature>
<feature type="transmembrane region" description="Helical" evidence="1">
    <location>
        <begin position="404"/>
        <end position="424"/>
    </location>
</feature>
<feature type="transmembrane region" description="Helical" evidence="1">
    <location>
        <begin position="428"/>
        <end position="448"/>
    </location>
</feature>
<feature type="transmembrane region" description="Helical" evidence="1">
    <location>
        <begin position="464"/>
        <end position="484"/>
    </location>
</feature>
<feature type="transmembrane region" description="Helical" evidence="1">
    <location>
        <begin position="493"/>
        <end position="513"/>
    </location>
</feature>
<organism>
    <name type="scientific">Escherichia coli (strain SE11)</name>
    <dbReference type="NCBI Taxonomy" id="409438"/>
    <lineage>
        <taxon>Bacteria</taxon>
        <taxon>Pseudomonadati</taxon>
        <taxon>Pseudomonadota</taxon>
        <taxon>Gammaproteobacteria</taxon>
        <taxon>Enterobacterales</taxon>
        <taxon>Enterobacteriaceae</taxon>
        <taxon>Escherichia</taxon>
    </lineage>
</organism>
<comment type="function">
    <text evidence="1">Transports acetate.</text>
</comment>
<comment type="subcellular location">
    <subcellularLocation>
        <location evidence="1">Cell inner membrane</location>
        <topology evidence="1">Multi-pass membrane protein</topology>
    </subcellularLocation>
</comment>
<comment type="similarity">
    <text evidence="1">Belongs to the sodium:solute symporter (SSF) (TC 2.A.21) family.</text>
</comment>
<keyword id="KW-0997">Cell inner membrane</keyword>
<keyword id="KW-1003">Cell membrane</keyword>
<keyword id="KW-0406">Ion transport</keyword>
<keyword id="KW-0472">Membrane</keyword>
<keyword id="KW-0915">Sodium</keyword>
<keyword id="KW-0739">Sodium transport</keyword>
<keyword id="KW-0769">Symport</keyword>
<keyword id="KW-0812">Transmembrane</keyword>
<keyword id="KW-1133">Transmembrane helix</keyword>
<keyword id="KW-0813">Transport</keyword>
<proteinExistence type="inferred from homology"/>
<protein>
    <recommendedName>
        <fullName evidence="1">Cation/acetate symporter ActP</fullName>
    </recommendedName>
    <alternativeName>
        <fullName evidence="1">Acetate permease</fullName>
    </alternativeName>
    <alternativeName>
        <fullName evidence="1">Acetate transporter ActP</fullName>
    </alternativeName>
</protein>
<name>ACTP_ECOSE</name>
<reference key="1">
    <citation type="journal article" date="2008" name="DNA Res.">
        <title>Complete genome sequence and comparative analysis of the wild-type commensal Escherichia coli strain SE11 isolated from a healthy adult.</title>
        <authorList>
            <person name="Oshima K."/>
            <person name="Toh H."/>
            <person name="Ogura Y."/>
            <person name="Sasamoto H."/>
            <person name="Morita H."/>
            <person name="Park S.-H."/>
            <person name="Ooka T."/>
            <person name="Iyoda S."/>
            <person name="Taylor T.D."/>
            <person name="Hayashi T."/>
            <person name="Itoh K."/>
            <person name="Hattori M."/>
        </authorList>
    </citation>
    <scope>NUCLEOTIDE SEQUENCE [LARGE SCALE GENOMIC DNA]</scope>
    <source>
        <strain>SE11</strain>
    </source>
</reference>
<evidence type="ECO:0000255" key="1">
    <source>
        <dbReference type="HAMAP-Rule" id="MF_01426"/>
    </source>
</evidence>
<sequence length="549" mass="59197">MKRVLTALAATLPFAANAADAISGAVERQPTNWQAIIMFLIFVVFTLGITYWASKRVRSRSDYYTAGGNITGFQNGLAIAGDYMSAASFLGISALVFTSGYDGLIYSLGFLVGWPIILFLIAERLRNLGRYTFADVASYRLKQGPIRILSACGSLVVVALYLIAQMVGAGKLIELLFGLNYHIAVVLVGVLMMMYVLFGGMLATTWVQIIKAVLLLFGASFMAFMVMKHVGFSFNNLFSEAMAVHPKGVDIMKPGGLVKDPISALSLGLGLMFGTAGLPHILMRFFTVSDAREARKSVFYATGFMGYFYILTFIIGFGAIMLVGANPEYKDAAGHLIGGNNMAAVHLANAVGGNLFLGFISAVAFATILAVVAGLTLAGASAVSHDLYANVFKKGATEREELRVSKITVLILGVIAIILGVLFENQNIAFMVGLAFAIAASCNFPIILLSMYWSKLTTRGAMMGGWLGLITAVVLMILGPTIWVQILGHEKAIFPYEYPALFSITVAFLGIWFFSATDNSAEGARERELFRAQFIRSQTGFGVEQGRAH</sequence>
<dbReference type="EMBL" id="AP009240">
    <property type="protein sequence ID" value="BAG79886.1"/>
    <property type="molecule type" value="Genomic_DNA"/>
</dbReference>
<dbReference type="RefSeq" id="WP_000832573.1">
    <property type="nucleotide sequence ID" value="NC_011415.1"/>
</dbReference>
<dbReference type="SMR" id="B6I5T5"/>
<dbReference type="KEGG" id="ecy:ECSE_4362"/>
<dbReference type="HOGENOM" id="CLU_018808_8_3_6"/>
<dbReference type="Proteomes" id="UP000008199">
    <property type="component" value="Chromosome"/>
</dbReference>
<dbReference type="GO" id="GO:0005886">
    <property type="term" value="C:plasma membrane"/>
    <property type="evidence" value="ECO:0007669"/>
    <property type="project" value="UniProtKB-SubCell"/>
</dbReference>
<dbReference type="GO" id="GO:0015123">
    <property type="term" value="F:acetate transmembrane transporter activity"/>
    <property type="evidence" value="ECO:0007669"/>
    <property type="project" value="UniProtKB-UniRule"/>
</dbReference>
<dbReference type="GO" id="GO:0043879">
    <property type="term" value="F:glycolate transmembrane transporter activity"/>
    <property type="evidence" value="ECO:0007669"/>
    <property type="project" value="InterPro"/>
</dbReference>
<dbReference type="GO" id="GO:0015293">
    <property type="term" value="F:symporter activity"/>
    <property type="evidence" value="ECO:0007669"/>
    <property type="project" value="UniProtKB-KW"/>
</dbReference>
<dbReference type="GO" id="GO:0006847">
    <property type="term" value="P:plasma membrane acetate transport"/>
    <property type="evidence" value="ECO:0007669"/>
    <property type="project" value="TreeGrafter"/>
</dbReference>
<dbReference type="GO" id="GO:0006814">
    <property type="term" value="P:sodium ion transport"/>
    <property type="evidence" value="ECO:0007669"/>
    <property type="project" value="UniProtKB-KW"/>
</dbReference>
<dbReference type="CDD" id="cd11480">
    <property type="entry name" value="SLC5sbd_u4"/>
    <property type="match status" value="1"/>
</dbReference>
<dbReference type="FunFam" id="1.20.1730.10:FF:000001">
    <property type="entry name" value="Cation/acetate symporter ActP"/>
    <property type="match status" value="1"/>
</dbReference>
<dbReference type="Gene3D" id="1.20.1730.10">
    <property type="entry name" value="Sodium/glucose cotransporter"/>
    <property type="match status" value="1"/>
</dbReference>
<dbReference type="HAMAP" id="MF_01426">
    <property type="entry name" value="Acet_symport_ActP"/>
    <property type="match status" value="1"/>
</dbReference>
<dbReference type="InterPro" id="IPR014083">
    <property type="entry name" value="Cation/Ac_symporter_ActP"/>
</dbReference>
<dbReference type="InterPro" id="IPR038377">
    <property type="entry name" value="Na/Glc_symporter_sf"/>
</dbReference>
<dbReference type="InterPro" id="IPR001734">
    <property type="entry name" value="Na/solute_symporter"/>
</dbReference>
<dbReference type="InterPro" id="IPR018212">
    <property type="entry name" value="Na/solute_symporter_CS"/>
</dbReference>
<dbReference type="InterPro" id="IPR050277">
    <property type="entry name" value="Sodium:Solute_Symporter"/>
</dbReference>
<dbReference type="NCBIfam" id="NF006903">
    <property type="entry name" value="PRK09395.1"/>
    <property type="match status" value="1"/>
</dbReference>
<dbReference type="NCBIfam" id="NF009135">
    <property type="entry name" value="PRK12488.1"/>
    <property type="match status" value="1"/>
</dbReference>
<dbReference type="NCBIfam" id="TIGR00813">
    <property type="entry name" value="sss"/>
    <property type="match status" value="1"/>
</dbReference>
<dbReference type="NCBIfam" id="TIGR02711">
    <property type="entry name" value="symport_actP"/>
    <property type="match status" value="1"/>
</dbReference>
<dbReference type="PANTHER" id="PTHR48086:SF6">
    <property type="entry name" value="CATION_ACETATE SYMPORTER ACTP"/>
    <property type="match status" value="1"/>
</dbReference>
<dbReference type="PANTHER" id="PTHR48086">
    <property type="entry name" value="SODIUM/PROLINE SYMPORTER-RELATED"/>
    <property type="match status" value="1"/>
</dbReference>
<dbReference type="Pfam" id="PF00474">
    <property type="entry name" value="SSF"/>
    <property type="match status" value="1"/>
</dbReference>
<dbReference type="PROSITE" id="PS00456">
    <property type="entry name" value="NA_SOLUT_SYMP_1"/>
    <property type="match status" value="1"/>
</dbReference>
<dbReference type="PROSITE" id="PS00457">
    <property type="entry name" value="NA_SOLUT_SYMP_2"/>
    <property type="match status" value="1"/>
</dbReference>
<dbReference type="PROSITE" id="PS50283">
    <property type="entry name" value="NA_SOLUT_SYMP_3"/>
    <property type="match status" value="1"/>
</dbReference>